<protein>
    <recommendedName>
        <fullName evidence="1">D-ribose pyranase</fullName>
        <ecNumber evidence="1">5.4.99.62</ecNumber>
    </recommendedName>
</protein>
<organism>
    <name type="scientific">Shewanella halifaxensis (strain HAW-EB4)</name>
    <dbReference type="NCBI Taxonomy" id="458817"/>
    <lineage>
        <taxon>Bacteria</taxon>
        <taxon>Pseudomonadati</taxon>
        <taxon>Pseudomonadota</taxon>
        <taxon>Gammaproteobacteria</taxon>
        <taxon>Alteromonadales</taxon>
        <taxon>Shewanellaceae</taxon>
        <taxon>Shewanella</taxon>
    </lineage>
</organism>
<comment type="function">
    <text evidence="1">Catalyzes the interconversion of beta-pyran and beta-furan forms of D-ribose.</text>
</comment>
<comment type="catalytic activity">
    <reaction evidence="1">
        <text>beta-D-ribopyranose = beta-D-ribofuranose</text>
        <dbReference type="Rhea" id="RHEA:25432"/>
        <dbReference type="ChEBI" id="CHEBI:27476"/>
        <dbReference type="ChEBI" id="CHEBI:47002"/>
        <dbReference type="EC" id="5.4.99.62"/>
    </reaction>
</comment>
<comment type="pathway">
    <text evidence="1">Carbohydrate metabolism; D-ribose degradation; D-ribose 5-phosphate from beta-D-ribopyranose: step 1/2.</text>
</comment>
<comment type="subunit">
    <text evidence="1">Homodecamer.</text>
</comment>
<comment type="subcellular location">
    <subcellularLocation>
        <location evidence="1">Cytoplasm</location>
    </subcellularLocation>
</comment>
<comment type="similarity">
    <text evidence="1">Belongs to the RbsD / FucU family. RbsD subfamily.</text>
</comment>
<accession>B0TS18</accession>
<sequence length="139" mass="15133">MNKHALLNADMNYLVATLGHTDEVAICDAGLPIPAAVQRIDLALTHGVPSFIATVKIWLASSQIEGVVLAQEFADVSPECHQALLVEIEAEQLATGRTFSIEYVSHEAFKQRTHNSRAVIRTGECTPYANVIFKTGVVF</sequence>
<name>RBSD_SHEHH</name>
<gene>
    <name evidence="1" type="primary">rbsD</name>
    <name type="ordered locus">Shal_0578</name>
</gene>
<dbReference type="EC" id="5.4.99.62" evidence="1"/>
<dbReference type="EMBL" id="CP000931">
    <property type="protein sequence ID" value="ABZ75153.1"/>
    <property type="molecule type" value="Genomic_DNA"/>
</dbReference>
<dbReference type="RefSeq" id="WP_012275707.1">
    <property type="nucleotide sequence ID" value="NC_010334.1"/>
</dbReference>
<dbReference type="SMR" id="B0TS18"/>
<dbReference type="STRING" id="458817.Shal_0578"/>
<dbReference type="KEGG" id="shl:Shal_0578"/>
<dbReference type="eggNOG" id="COG1869">
    <property type="taxonomic scope" value="Bacteria"/>
</dbReference>
<dbReference type="HOGENOM" id="CLU_135498_0_0_6"/>
<dbReference type="OrthoDB" id="9805009at2"/>
<dbReference type="UniPathway" id="UPA00916">
    <property type="reaction ID" value="UER00888"/>
</dbReference>
<dbReference type="Proteomes" id="UP000001317">
    <property type="component" value="Chromosome"/>
</dbReference>
<dbReference type="GO" id="GO:0005829">
    <property type="term" value="C:cytosol"/>
    <property type="evidence" value="ECO:0007669"/>
    <property type="project" value="TreeGrafter"/>
</dbReference>
<dbReference type="GO" id="GO:0062193">
    <property type="term" value="F:D-ribose pyranase activity"/>
    <property type="evidence" value="ECO:0007669"/>
    <property type="project" value="UniProtKB-EC"/>
</dbReference>
<dbReference type="GO" id="GO:0016872">
    <property type="term" value="F:intramolecular lyase activity"/>
    <property type="evidence" value="ECO:0007669"/>
    <property type="project" value="UniProtKB-UniRule"/>
</dbReference>
<dbReference type="GO" id="GO:0048029">
    <property type="term" value="F:monosaccharide binding"/>
    <property type="evidence" value="ECO:0007669"/>
    <property type="project" value="InterPro"/>
</dbReference>
<dbReference type="GO" id="GO:0019303">
    <property type="term" value="P:D-ribose catabolic process"/>
    <property type="evidence" value="ECO:0007669"/>
    <property type="project" value="UniProtKB-UniRule"/>
</dbReference>
<dbReference type="Gene3D" id="3.40.1650.10">
    <property type="entry name" value="RbsD-like domain"/>
    <property type="match status" value="1"/>
</dbReference>
<dbReference type="HAMAP" id="MF_01661">
    <property type="entry name" value="D_rib_pyranase"/>
    <property type="match status" value="1"/>
</dbReference>
<dbReference type="InterPro" id="IPR023064">
    <property type="entry name" value="D-ribose_pyranase"/>
</dbReference>
<dbReference type="InterPro" id="IPR023750">
    <property type="entry name" value="RbsD-like_sf"/>
</dbReference>
<dbReference type="InterPro" id="IPR007721">
    <property type="entry name" value="RbsD_FucU"/>
</dbReference>
<dbReference type="NCBIfam" id="NF008761">
    <property type="entry name" value="PRK11797.1"/>
    <property type="match status" value="1"/>
</dbReference>
<dbReference type="PANTHER" id="PTHR37831">
    <property type="entry name" value="D-RIBOSE PYRANASE"/>
    <property type="match status" value="1"/>
</dbReference>
<dbReference type="PANTHER" id="PTHR37831:SF1">
    <property type="entry name" value="D-RIBOSE PYRANASE"/>
    <property type="match status" value="1"/>
</dbReference>
<dbReference type="Pfam" id="PF05025">
    <property type="entry name" value="RbsD_FucU"/>
    <property type="match status" value="1"/>
</dbReference>
<dbReference type="SUPFAM" id="SSF102546">
    <property type="entry name" value="RbsD-like"/>
    <property type="match status" value="1"/>
</dbReference>
<feature type="chain" id="PRO_0000346255" description="D-ribose pyranase">
    <location>
        <begin position="1"/>
        <end position="139"/>
    </location>
</feature>
<feature type="active site" description="Proton donor" evidence="1">
    <location>
        <position position="20"/>
    </location>
</feature>
<feature type="binding site" evidence="1">
    <location>
        <position position="28"/>
    </location>
    <ligand>
        <name>substrate</name>
    </ligand>
</feature>
<feature type="binding site" evidence="1">
    <location>
        <position position="106"/>
    </location>
    <ligand>
        <name>substrate</name>
    </ligand>
</feature>
<feature type="binding site" evidence="1">
    <location>
        <begin position="128"/>
        <end position="130"/>
    </location>
    <ligand>
        <name>substrate</name>
    </ligand>
</feature>
<evidence type="ECO:0000255" key="1">
    <source>
        <dbReference type="HAMAP-Rule" id="MF_01661"/>
    </source>
</evidence>
<proteinExistence type="inferred from homology"/>
<reference key="1">
    <citation type="submission" date="2008-01" db="EMBL/GenBank/DDBJ databases">
        <title>Complete sequence of Shewanella halifaxensis HAW-EB4.</title>
        <authorList>
            <consortium name="US DOE Joint Genome Institute"/>
            <person name="Copeland A."/>
            <person name="Lucas S."/>
            <person name="Lapidus A."/>
            <person name="Glavina del Rio T."/>
            <person name="Dalin E."/>
            <person name="Tice H."/>
            <person name="Bruce D."/>
            <person name="Goodwin L."/>
            <person name="Pitluck S."/>
            <person name="Sims D."/>
            <person name="Brettin T."/>
            <person name="Detter J.C."/>
            <person name="Han C."/>
            <person name="Kuske C.R."/>
            <person name="Schmutz J."/>
            <person name="Larimer F."/>
            <person name="Land M."/>
            <person name="Hauser L."/>
            <person name="Kyrpides N."/>
            <person name="Kim E."/>
            <person name="Zhao J.-S."/>
            <person name="Richardson P."/>
        </authorList>
    </citation>
    <scope>NUCLEOTIDE SEQUENCE [LARGE SCALE GENOMIC DNA]</scope>
    <source>
        <strain>HAW-EB4</strain>
    </source>
</reference>
<keyword id="KW-0119">Carbohydrate metabolism</keyword>
<keyword id="KW-0963">Cytoplasm</keyword>
<keyword id="KW-0413">Isomerase</keyword>